<dbReference type="EMBL" id="CP000964">
    <property type="protein sequence ID" value="ACI08166.1"/>
    <property type="molecule type" value="Genomic_DNA"/>
</dbReference>
<dbReference type="SMR" id="B5XV79"/>
<dbReference type="KEGG" id="kpe:KPK_1059"/>
<dbReference type="HOGENOM" id="CLU_126929_0_0_6"/>
<dbReference type="Proteomes" id="UP000001734">
    <property type="component" value="Chromosome"/>
</dbReference>
<dbReference type="GO" id="GO:0016151">
    <property type="term" value="F:nickel cation binding"/>
    <property type="evidence" value="ECO:0007669"/>
    <property type="project" value="UniProtKB-UniRule"/>
</dbReference>
<dbReference type="GO" id="GO:0008270">
    <property type="term" value="F:zinc ion binding"/>
    <property type="evidence" value="ECO:0007669"/>
    <property type="project" value="UniProtKB-UniRule"/>
</dbReference>
<dbReference type="GO" id="GO:0051604">
    <property type="term" value="P:protein maturation"/>
    <property type="evidence" value="ECO:0007669"/>
    <property type="project" value="InterPro"/>
</dbReference>
<dbReference type="GO" id="GO:0036211">
    <property type="term" value="P:protein modification process"/>
    <property type="evidence" value="ECO:0007669"/>
    <property type="project" value="UniProtKB-UniRule"/>
</dbReference>
<dbReference type="FunFam" id="3.30.2320.80:FF:000001">
    <property type="entry name" value="Hydrogenase maturation factor HypA"/>
    <property type="match status" value="1"/>
</dbReference>
<dbReference type="Gene3D" id="3.30.2320.80">
    <property type="match status" value="1"/>
</dbReference>
<dbReference type="HAMAP" id="MF_00213">
    <property type="entry name" value="HypA_HybF"/>
    <property type="match status" value="1"/>
</dbReference>
<dbReference type="InterPro" id="IPR020538">
    <property type="entry name" value="Hydgase_Ni_incorp_HypA/HybF_CS"/>
</dbReference>
<dbReference type="InterPro" id="IPR000688">
    <property type="entry name" value="HypA/HybF"/>
</dbReference>
<dbReference type="NCBIfam" id="TIGR00100">
    <property type="entry name" value="hypA"/>
    <property type="match status" value="1"/>
</dbReference>
<dbReference type="NCBIfam" id="NF002979">
    <property type="entry name" value="PRK03681.1"/>
    <property type="match status" value="1"/>
</dbReference>
<dbReference type="NCBIfam" id="NF009046">
    <property type="entry name" value="PRK12380.1"/>
    <property type="match status" value="1"/>
</dbReference>
<dbReference type="PANTHER" id="PTHR34535">
    <property type="entry name" value="HYDROGENASE MATURATION FACTOR HYPA"/>
    <property type="match status" value="1"/>
</dbReference>
<dbReference type="PANTHER" id="PTHR34535:SF3">
    <property type="entry name" value="HYDROGENASE MATURATION FACTOR HYPA"/>
    <property type="match status" value="1"/>
</dbReference>
<dbReference type="Pfam" id="PF01155">
    <property type="entry name" value="HypA"/>
    <property type="match status" value="1"/>
</dbReference>
<dbReference type="PIRSF" id="PIRSF004761">
    <property type="entry name" value="Hydrgn_mat_HypA"/>
    <property type="match status" value="1"/>
</dbReference>
<dbReference type="PROSITE" id="PS01249">
    <property type="entry name" value="HYPA"/>
    <property type="match status" value="1"/>
</dbReference>
<keyword id="KW-0479">Metal-binding</keyword>
<keyword id="KW-0533">Nickel</keyword>
<keyword id="KW-0862">Zinc</keyword>
<organism>
    <name type="scientific">Klebsiella pneumoniae (strain 342)</name>
    <dbReference type="NCBI Taxonomy" id="507522"/>
    <lineage>
        <taxon>Bacteria</taxon>
        <taxon>Pseudomonadati</taxon>
        <taxon>Pseudomonadota</taxon>
        <taxon>Gammaproteobacteria</taxon>
        <taxon>Enterobacterales</taxon>
        <taxon>Enterobacteriaceae</taxon>
        <taxon>Klebsiella/Raoultella group</taxon>
        <taxon>Klebsiella</taxon>
        <taxon>Klebsiella pneumoniae complex</taxon>
    </lineage>
</organism>
<accession>B5XV79</accession>
<protein>
    <recommendedName>
        <fullName evidence="1">Hydrogenase maturation factor HypA</fullName>
    </recommendedName>
</protein>
<proteinExistence type="inferred from homology"/>
<name>HYPA_KLEP3</name>
<sequence length="114" mass="12914">MHEITLSQRALEIIEQQAQQAGARRVTGVWLKVGAFSCVEASALTFCFELVCRGTLAEGCELHIAEQQAECWCERCQQYVHLVSQHVRRCPLCNNDQLQIVADDGLQIQRLELE</sequence>
<reference key="1">
    <citation type="journal article" date="2008" name="PLoS Genet.">
        <title>Complete genome sequence of the N2-fixing broad host range endophyte Klebsiella pneumoniae 342 and virulence predictions verified in mice.</title>
        <authorList>
            <person name="Fouts D.E."/>
            <person name="Tyler H.L."/>
            <person name="DeBoy R.T."/>
            <person name="Daugherty S."/>
            <person name="Ren Q."/>
            <person name="Badger J.H."/>
            <person name="Durkin A.S."/>
            <person name="Huot H."/>
            <person name="Shrivastava S."/>
            <person name="Kothari S."/>
            <person name="Dodson R.J."/>
            <person name="Mohamoud Y."/>
            <person name="Khouri H."/>
            <person name="Roesch L.F.W."/>
            <person name="Krogfelt K.A."/>
            <person name="Struve C."/>
            <person name="Triplett E.W."/>
            <person name="Methe B.A."/>
        </authorList>
    </citation>
    <scope>NUCLEOTIDE SEQUENCE [LARGE SCALE GENOMIC DNA]</scope>
    <source>
        <strain>342</strain>
    </source>
</reference>
<comment type="function">
    <text evidence="1">Involved in the maturation of [NiFe] hydrogenases. Required for nickel insertion into the metal center of the hydrogenase.</text>
</comment>
<comment type="similarity">
    <text evidence="1">Belongs to the HypA/HybF family.</text>
</comment>
<feature type="chain" id="PRO_1000099892" description="Hydrogenase maturation factor HypA">
    <location>
        <begin position="1"/>
        <end position="114"/>
    </location>
</feature>
<feature type="binding site" evidence="1">
    <location>
        <position position="2"/>
    </location>
    <ligand>
        <name>Ni(2+)</name>
        <dbReference type="ChEBI" id="CHEBI:49786"/>
    </ligand>
</feature>
<feature type="binding site" evidence="1">
    <location>
        <position position="73"/>
    </location>
    <ligand>
        <name>Zn(2+)</name>
        <dbReference type="ChEBI" id="CHEBI:29105"/>
    </ligand>
</feature>
<feature type="binding site" evidence="1">
    <location>
        <position position="76"/>
    </location>
    <ligand>
        <name>Zn(2+)</name>
        <dbReference type="ChEBI" id="CHEBI:29105"/>
    </ligand>
</feature>
<feature type="binding site" evidence="1">
    <location>
        <position position="90"/>
    </location>
    <ligand>
        <name>Zn(2+)</name>
        <dbReference type="ChEBI" id="CHEBI:29105"/>
    </ligand>
</feature>
<feature type="binding site" evidence="1">
    <location>
        <position position="93"/>
    </location>
    <ligand>
        <name>Zn(2+)</name>
        <dbReference type="ChEBI" id="CHEBI:29105"/>
    </ligand>
</feature>
<gene>
    <name evidence="1" type="primary">hypA</name>
    <name type="ordered locus">KPK_1059</name>
</gene>
<evidence type="ECO:0000255" key="1">
    <source>
        <dbReference type="HAMAP-Rule" id="MF_00213"/>
    </source>
</evidence>